<keyword id="KW-1185">Reference proteome</keyword>
<keyword id="KW-0687">Ribonucleoprotein</keyword>
<keyword id="KW-0689">Ribosomal protein</keyword>
<keyword id="KW-0694">RNA-binding</keyword>
<keyword id="KW-0699">rRNA-binding</keyword>
<protein>
    <recommendedName>
        <fullName evidence="1">Large ribosomal subunit protein uL18</fullName>
    </recommendedName>
    <alternativeName>
        <fullName evidence="2">50S ribosomal protein L18</fullName>
    </alternativeName>
</protein>
<reference key="1">
    <citation type="journal article" date="2007" name="PLoS Genet.">
        <title>Patterns and implications of gene gain and loss in the evolution of Prochlorococcus.</title>
        <authorList>
            <person name="Kettler G.C."/>
            <person name="Martiny A.C."/>
            <person name="Huang K."/>
            <person name="Zucker J."/>
            <person name="Coleman M.L."/>
            <person name="Rodrigue S."/>
            <person name="Chen F."/>
            <person name="Lapidus A."/>
            <person name="Ferriera S."/>
            <person name="Johnson J."/>
            <person name="Steglich C."/>
            <person name="Church G.M."/>
            <person name="Richardson P."/>
            <person name="Chisholm S.W."/>
        </authorList>
    </citation>
    <scope>NUCLEOTIDE SEQUENCE [LARGE SCALE GENOMIC DNA]</scope>
    <source>
        <strain>MIT 9301</strain>
    </source>
</reference>
<comment type="function">
    <text evidence="1">This is one of the proteins that bind and probably mediate the attachment of the 5S RNA into the large ribosomal subunit, where it forms part of the central protuberance.</text>
</comment>
<comment type="subunit">
    <text evidence="1">Part of the 50S ribosomal subunit; part of the 5S rRNA/L5/L18/L25 subcomplex. Contacts the 5S and 23S rRNAs.</text>
</comment>
<comment type="similarity">
    <text evidence="1">Belongs to the universal ribosomal protein uL18 family.</text>
</comment>
<organism>
    <name type="scientific">Prochlorococcus marinus (strain MIT 9301)</name>
    <dbReference type="NCBI Taxonomy" id="167546"/>
    <lineage>
        <taxon>Bacteria</taxon>
        <taxon>Bacillati</taxon>
        <taxon>Cyanobacteriota</taxon>
        <taxon>Cyanophyceae</taxon>
        <taxon>Synechococcales</taxon>
        <taxon>Prochlorococcaceae</taxon>
        <taxon>Prochlorococcus</taxon>
    </lineage>
</organism>
<name>RL18_PROM0</name>
<sequence>MTKLSRKLQTQKRHRRLRRFLIGDATRPRLSVFRSNNHIYAQVIDDSAQTTICSASTVDKELREKSEKLPSDCNSSSIVGKLLAKRAIKKGIKQVIFDRGGNLYHGRVKALADAAREAGLEF</sequence>
<evidence type="ECO:0000255" key="1">
    <source>
        <dbReference type="HAMAP-Rule" id="MF_01337"/>
    </source>
</evidence>
<evidence type="ECO:0000305" key="2"/>
<gene>
    <name evidence="1" type="primary">rplR</name>
    <name evidence="1" type="synonym">rpl18</name>
    <name type="ordered locus">P9301_17341</name>
</gene>
<accession>A3PF32</accession>
<feature type="chain" id="PRO_1000053079" description="Large ribosomal subunit protein uL18">
    <location>
        <begin position="1"/>
        <end position="122"/>
    </location>
</feature>
<dbReference type="EMBL" id="CP000576">
    <property type="protein sequence ID" value="ABO18357.1"/>
    <property type="molecule type" value="Genomic_DNA"/>
</dbReference>
<dbReference type="RefSeq" id="WP_011863649.1">
    <property type="nucleotide sequence ID" value="NC_009091.1"/>
</dbReference>
<dbReference type="SMR" id="A3PF32"/>
<dbReference type="STRING" id="167546.P9301_17341"/>
<dbReference type="KEGG" id="pmg:P9301_17341"/>
<dbReference type="eggNOG" id="COG0256">
    <property type="taxonomic scope" value="Bacteria"/>
</dbReference>
<dbReference type="HOGENOM" id="CLU_098841_0_1_3"/>
<dbReference type="OrthoDB" id="9810939at2"/>
<dbReference type="Proteomes" id="UP000001430">
    <property type="component" value="Chromosome"/>
</dbReference>
<dbReference type="GO" id="GO:0022625">
    <property type="term" value="C:cytosolic large ribosomal subunit"/>
    <property type="evidence" value="ECO:0007669"/>
    <property type="project" value="TreeGrafter"/>
</dbReference>
<dbReference type="GO" id="GO:0008097">
    <property type="term" value="F:5S rRNA binding"/>
    <property type="evidence" value="ECO:0007669"/>
    <property type="project" value="TreeGrafter"/>
</dbReference>
<dbReference type="GO" id="GO:0003735">
    <property type="term" value="F:structural constituent of ribosome"/>
    <property type="evidence" value="ECO:0007669"/>
    <property type="project" value="InterPro"/>
</dbReference>
<dbReference type="GO" id="GO:0006412">
    <property type="term" value="P:translation"/>
    <property type="evidence" value="ECO:0007669"/>
    <property type="project" value="UniProtKB-UniRule"/>
</dbReference>
<dbReference type="CDD" id="cd00432">
    <property type="entry name" value="Ribosomal_L18_L5e"/>
    <property type="match status" value="1"/>
</dbReference>
<dbReference type="FunFam" id="3.30.420.100:FF:000001">
    <property type="entry name" value="50S ribosomal protein L18"/>
    <property type="match status" value="1"/>
</dbReference>
<dbReference type="Gene3D" id="3.30.420.100">
    <property type="match status" value="1"/>
</dbReference>
<dbReference type="HAMAP" id="MF_01337_B">
    <property type="entry name" value="Ribosomal_uL18_B"/>
    <property type="match status" value="1"/>
</dbReference>
<dbReference type="InterPro" id="IPR004389">
    <property type="entry name" value="Ribosomal_uL18_bac-type"/>
</dbReference>
<dbReference type="InterPro" id="IPR005484">
    <property type="entry name" value="Ribosomal_uL18_bac/euk"/>
</dbReference>
<dbReference type="NCBIfam" id="TIGR00060">
    <property type="entry name" value="L18_bact"/>
    <property type="match status" value="1"/>
</dbReference>
<dbReference type="PANTHER" id="PTHR12899">
    <property type="entry name" value="39S RIBOSOMAL PROTEIN L18, MITOCHONDRIAL"/>
    <property type="match status" value="1"/>
</dbReference>
<dbReference type="PANTHER" id="PTHR12899:SF3">
    <property type="entry name" value="LARGE RIBOSOMAL SUBUNIT PROTEIN UL18M"/>
    <property type="match status" value="1"/>
</dbReference>
<dbReference type="Pfam" id="PF00861">
    <property type="entry name" value="Ribosomal_L18p"/>
    <property type="match status" value="1"/>
</dbReference>
<dbReference type="SUPFAM" id="SSF53137">
    <property type="entry name" value="Translational machinery components"/>
    <property type="match status" value="1"/>
</dbReference>
<proteinExistence type="inferred from homology"/>